<proteinExistence type="inferred from homology"/>
<feature type="chain" id="PRO_1000187260" description="Heme A synthase">
    <location>
        <begin position="1"/>
        <end position="331"/>
    </location>
</feature>
<feature type="transmembrane region" description="Helical" evidence="1">
    <location>
        <begin position="6"/>
        <end position="26"/>
    </location>
</feature>
<feature type="transmembrane region" description="Helical" evidence="1">
    <location>
        <begin position="87"/>
        <end position="107"/>
    </location>
</feature>
<feature type="transmembrane region" description="Helical" evidence="1">
    <location>
        <begin position="124"/>
        <end position="144"/>
    </location>
</feature>
<feature type="transmembrane region" description="Helical" evidence="1">
    <location>
        <begin position="154"/>
        <end position="174"/>
    </location>
</feature>
<feature type="transmembrane region" description="Helical" evidence="1">
    <location>
        <begin position="193"/>
        <end position="213"/>
    </location>
</feature>
<feature type="transmembrane region" description="Helical" evidence="1">
    <location>
        <begin position="251"/>
        <end position="271"/>
    </location>
</feature>
<feature type="transmembrane region" description="Helical" evidence="1">
    <location>
        <begin position="279"/>
        <end position="299"/>
    </location>
</feature>
<feature type="transmembrane region" description="Helical" evidence="1">
    <location>
        <begin position="301"/>
        <end position="321"/>
    </location>
</feature>
<feature type="binding site" description="axial binding residue" evidence="1">
    <location>
        <position position="255"/>
    </location>
    <ligand>
        <name>heme</name>
        <dbReference type="ChEBI" id="CHEBI:30413"/>
    </ligand>
    <ligandPart>
        <name>Fe</name>
        <dbReference type="ChEBI" id="CHEBI:18248"/>
    </ligandPart>
</feature>
<feature type="binding site" description="axial binding residue" evidence="1">
    <location>
        <position position="309"/>
    </location>
    <ligand>
        <name>heme</name>
        <dbReference type="ChEBI" id="CHEBI:30413"/>
    </ligand>
    <ligandPart>
        <name>Fe</name>
        <dbReference type="ChEBI" id="CHEBI:18248"/>
    </ligandPart>
</feature>
<comment type="function">
    <text evidence="1">Catalyzes the conversion of heme O to heme A by two successive hydroxylations of the methyl group at C8. The first hydroxylation forms heme I, the second hydroxylation results in an unstable dihydroxymethyl group, which spontaneously dehydrates, resulting in the formyl group of heme A.</text>
</comment>
<comment type="catalytic activity">
    <reaction evidence="1">
        <text>Fe(II)-heme o + 2 A + H2O = Fe(II)-heme a + 2 AH2</text>
        <dbReference type="Rhea" id="RHEA:63388"/>
        <dbReference type="ChEBI" id="CHEBI:13193"/>
        <dbReference type="ChEBI" id="CHEBI:15377"/>
        <dbReference type="ChEBI" id="CHEBI:17499"/>
        <dbReference type="ChEBI" id="CHEBI:60530"/>
        <dbReference type="ChEBI" id="CHEBI:61715"/>
        <dbReference type="EC" id="1.17.99.9"/>
    </reaction>
    <physiologicalReaction direction="left-to-right" evidence="1">
        <dbReference type="Rhea" id="RHEA:63389"/>
    </physiologicalReaction>
</comment>
<comment type="cofactor">
    <cofactor evidence="1">
        <name>heme b</name>
        <dbReference type="ChEBI" id="CHEBI:60344"/>
    </cofactor>
</comment>
<comment type="pathway">
    <text evidence="1">Porphyrin-containing compound metabolism; heme A biosynthesis; heme A from heme O: step 1/1.</text>
</comment>
<comment type="subunit">
    <text evidence="1">Interacts with CtaB.</text>
</comment>
<comment type="subcellular location">
    <subcellularLocation>
        <location evidence="1">Cell membrane</location>
        <topology evidence="1">Multi-pass membrane protein</topology>
    </subcellularLocation>
</comment>
<comment type="similarity">
    <text evidence="1">Belongs to the COX15/CtaA family. Type 2 subfamily.</text>
</comment>
<dbReference type="EC" id="1.17.99.9" evidence="1"/>
<dbReference type="EMBL" id="AM999887">
    <property type="protein sequence ID" value="CAQ54726.1"/>
    <property type="molecule type" value="Genomic_DNA"/>
</dbReference>
<dbReference type="RefSeq" id="WP_012481867.1">
    <property type="nucleotide sequence ID" value="NC_010981.1"/>
</dbReference>
<dbReference type="SMR" id="B3CLF8"/>
<dbReference type="KEGG" id="wpi:WP0618"/>
<dbReference type="eggNOG" id="COG1612">
    <property type="taxonomic scope" value="Bacteria"/>
</dbReference>
<dbReference type="HOGENOM" id="CLU_017627_0_0_5"/>
<dbReference type="UniPathway" id="UPA00269">
    <property type="reaction ID" value="UER00713"/>
</dbReference>
<dbReference type="Proteomes" id="UP000008814">
    <property type="component" value="Chromosome"/>
</dbReference>
<dbReference type="GO" id="GO:0005886">
    <property type="term" value="C:plasma membrane"/>
    <property type="evidence" value="ECO:0007669"/>
    <property type="project" value="UniProtKB-SubCell"/>
</dbReference>
<dbReference type="GO" id="GO:0046872">
    <property type="term" value="F:metal ion binding"/>
    <property type="evidence" value="ECO:0007669"/>
    <property type="project" value="UniProtKB-KW"/>
</dbReference>
<dbReference type="GO" id="GO:0016653">
    <property type="term" value="F:oxidoreductase activity, acting on NAD(P)H, heme protein as acceptor"/>
    <property type="evidence" value="ECO:0007669"/>
    <property type="project" value="InterPro"/>
</dbReference>
<dbReference type="GO" id="GO:0006784">
    <property type="term" value="P:heme A biosynthetic process"/>
    <property type="evidence" value="ECO:0007669"/>
    <property type="project" value="UniProtKB-UniRule"/>
</dbReference>
<dbReference type="HAMAP" id="MF_01665">
    <property type="entry name" value="HemeA_synth_type2"/>
    <property type="match status" value="1"/>
</dbReference>
<dbReference type="InterPro" id="IPR003780">
    <property type="entry name" value="COX15/CtaA_fam"/>
</dbReference>
<dbReference type="InterPro" id="IPR023754">
    <property type="entry name" value="HemeA_Synthase_type2"/>
</dbReference>
<dbReference type="PANTHER" id="PTHR23289">
    <property type="entry name" value="CYTOCHROME C OXIDASE ASSEMBLY PROTEIN COX15"/>
    <property type="match status" value="1"/>
</dbReference>
<dbReference type="PANTHER" id="PTHR23289:SF2">
    <property type="entry name" value="CYTOCHROME C OXIDASE ASSEMBLY PROTEIN COX15 HOMOLOG"/>
    <property type="match status" value="1"/>
</dbReference>
<dbReference type="Pfam" id="PF02628">
    <property type="entry name" value="COX15-CtaA"/>
    <property type="match status" value="1"/>
</dbReference>
<protein>
    <recommendedName>
        <fullName evidence="1">Heme A synthase</fullName>
        <shortName evidence="1">HAS</shortName>
        <ecNumber evidence="1">1.17.99.9</ecNumber>
    </recommendedName>
    <alternativeName>
        <fullName evidence="1">Cytochrome aa3-controlling protein</fullName>
    </alternativeName>
</protein>
<keyword id="KW-1003">Cell membrane</keyword>
<keyword id="KW-0350">Heme biosynthesis</keyword>
<keyword id="KW-0408">Iron</keyword>
<keyword id="KW-0472">Membrane</keyword>
<keyword id="KW-0479">Metal-binding</keyword>
<keyword id="KW-0560">Oxidoreductase</keyword>
<keyword id="KW-0812">Transmembrane</keyword>
<keyword id="KW-1133">Transmembrane helix</keyword>
<organism>
    <name type="scientific">Wolbachia pipientis subsp. Culex pipiens (strain wPip)</name>
    <dbReference type="NCBI Taxonomy" id="570417"/>
    <lineage>
        <taxon>Bacteria</taxon>
        <taxon>Pseudomonadati</taxon>
        <taxon>Pseudomonadota</taxon>
        <taxon>Alphaproteobacteria</taxon>
        <taxon>Rickettsiales</taxon>
        <taxon>Anaplasmataceae</taxon>
        <taxon>Wolbachieae</taxon>
        <taxon>Wolbachia</taxon>
    </lineage>
</organism>
<reference key="1">
    <citation type="journal article" date="2008" name="Mol. Biol. Evol.">
        <title>Genome evolution of Wolbachia strain wPip from the Culex pipiens group.</title>
        <authorList>
            <person name="Klasson L."/>
            <person name="Walker T."/>
            <person name="Sebaihia M."/>
            <person name="Sanders M.J."/>
            <person name="Quail M.A."/>
            <person name="Lord A."/>
            <person name="Sanders S."/>
            <person name="Earl J."/>
            <person name="O'Neill S.L."/>
            <person name="Thomson N."/>
            <person name="Sinkins S.P."/>
            <person name="Parkhill J."/>
        </authorList>
    </citation>
    <scope>NUCLEOTIDE SEQUENCE [LARGE SCALE GENOMIC DNA]</scope>
    <source>
        <strain>wPip</strain>
    </source>
</reference>
<name>CTAA_WOLPP</name>
<sequence>MEAKPVAIWLFLCSLMVICMVGIGGFTRLSKAGLSITEWKPITGTLPPLSEQDWLKEKSKYEATPEYKAFNYGMSMEEFRTIYLIEYVHRLIARLTGLVFILPFIYFTLKKRIPKNAVIRLSTALLFGILQAFAGWYMVKSGLVSNPHVSHYKLALHLLLALVIFALLSYQFFDYQIKPKQIIKINSNITCYIWIILILVTVQIIFGAFVAGLNAGLIYNTFPLMDGQIVPEDLFYLQPAWLNIFENRVTVQFIHRALALLILVLTAILTIKNASIKPLYVMLFSVIIQVILGIVTLLLHIPMAIAIAHQMFSFILFGSGLYCLRYLRNQI</sequence>
<gene>
    <name evidence="1" type="primary">ctaA</name>
    <name type="ordered locus">WP0618</name>
</gene>
<evidence type="ECO:0000255" key="1">
    <source>
        <dbReference type="HAMAP-Rule" id="MF_01665"/>
    </source>
</evidence>
<accession>B3CLF8</accession>